<proteinExistence type="inferred from homology"/>
<gene>
    <name type="primary">38</name>
</gene>
<feature type="chain" id="PRO_0000165032" description="Receptor-recognizing protein gp38">
    <location>
        <begin position="1"/>
        <end position="259"/>
    </location>
</feature>
<feature type="region of interest" description="Disordered" evidence="2">
    <location>
        <begin position="213"/>
        <end position="243"/>
    </location>
</feature>
<feature type="short sequence motif" description="GRM 1" evidence="1">
    <location>
        <begin position="113"/>
        <end position="122"/>
    </location>
</feature>
<feature type="short sequence motif" description="GRM 2" evidence="1">
    <location>
        <begin position="124"/>
        <end position="131"/>
    </location>
</feature>
<feature type="short sequence motif" description="GRM 3" evidence="1">
    <location>
        <begin position="151"/>
        <end position="161"/>
    </location>
</feature>
<feature type="short sequence motif" description="GRM 4" evidence="1">
    <location>
        <begin position="164"/>
        <end position="177"/>
    </location>
</feature>
<feature type="short sequence motif" description="GRM 5" evidence="1">
    <location>
        <begin position="180"/>
        <end position="186"/>
    </location>
</feature>
<feature type="short sequence motif" description="GRM 6" evidence="1">
    <location>
        <begin position="189"/>
        <end position="195"/>
    </location>
</feature>
<feature type="short sequence motif" description="GRM 7" evidence="1">
    <location>
        <begin position="197"/>
        <end position="204"/>
    </location>
</feature>
<feature type="short sequence motif" description="GRM 8" evidence="1">
    <location>
        <begin position="210"/>
        <end position="216"/>
    </location>
</feature>
<feature type="short sequence motif" description="GRM 9" evidence="1">
    <location>
        <begin position="219"/>
        <end position="224"/>
    </location>
</feature>
<feature type="short sequence motif" description="GRM 10" evidence="1">
    <location>
        <begin position="227"/>
        <end position="239"/>
    </location>
</feature>
<feature type="site" description="Interaction with the fiber protein p37" evidence="1">
    <location>
        <position position="7"/>
    </location>
</feature>
<feature type="site" description="Interaction with the fiber protein p37" evidence="1">
    <location>
        <position position="20"/>
    </location>
</feature>
<feature type="site" description="Interaction with the fiber protein p37" evidence="1">
    <location>
        <position position="35"/>
    </location>
</feature>
<sequence>MAVTGPWVGSSAVVNTGQNWMVGAAQRLRMGAPFWMSNMIGRSVEVIHTLGADHNFNGQWFRDRCFEAGSAPIVFNITGDLVSYSRDVPLFFMYGDTPNEYVQLNIHGVTMYGRGGNGWAACAIGASDGGVCIQNDIGGRLRINNGGAIAGGGGGGGGYSQANNWAGKYVCGGGGGRPFGLGGNNGARWPGGNASLTSPGAGGNTGTRYYAGGGGEVGQPGQYANPGASYSTPPTSPGAAVAGSAPTWQNVGAIYGPRV</sequence>
<dbReference type="EMBL" id="AF208841">
    <property type="protein sequence ID" value="AAG29755.1"/>
    <property type="molecule type" value="Genomic_DNA"/>
</dbReference>
<dbReference type="SMR" id="Q9G0B4"/>
<dbReference type="GO" id="GO:0098024">
    <property type="term" value="C:virus tail, fiber"/>
    <property type="evidence" value="ECO:0007669"/>
    <property type="project" value="UniProtKB-KW"/>
</dbReference>
<dbReference type="GO" id="GO:0098671">
    <property type="term" value="P:adhesion receptor-mediated virion attachment to host cell"/>
    <property type="evidence" value="ECO:0000314"/>
    <property type="project" value="UniProtKB"/>
</dbReference>
<dbReference type="GO" id="GO:0046718">
    <property type="term" value="P:symbiont entry into host cell"/>
    <property type="evidence" value="ECO:0007669"/>
    <property type="project" value="UniProtKB-KW"/>
</dbReference>
<dbReference type="InterPro" id="IPR048291">
    <property type="entry name" value="Gp38_N"/>
</dbReference>
<dbReference type="InterPro" id="IPR007932">
    <property type="entry name" value="Receptor-recog_Gp38"/>
</dbReference>
<dbReference type="Pfam" id="PF05268">
    <property type="entry name" value="GP38"/>
    <property type="match status" value="1"/>
</dbReference>
<dbReference type="Pfam" id="PF21721">
    <property type="entry name" value="Gp38_N"/>
    <property type="match status" value="1"/>
</dbReference>
<accession>Q9G0B4</accession>
<organism>
    <name type="scientific">Escherichia phage AR1</name>
    <name type="common">Bacteriophage AR1</name>
    <dbReference type="NCBI Taxonomy" id="66711"/>
    <lineage>
        <taxon>Viruses</taxon>
        <taxon>Duplodnaviria</taxon>
        <taxon>Heunggongvirae</taxon>
        <taxon>Uroviricota</taxon>
        <taxon>Caudoviricetes</taxon>
        <taxon>Straboviridae</taxon>
        <taxon>Tevenvirinae</taxon>
        <taxon>Tequatrovirus</taxon>
        <taxon>Tequatrovirus ar1</taxon>
    </lineage>
</organism>
<reference key="1">
    <citation type="journal article" date="2000" name="J. Bacteriol.">
        <title>Characterization of the distal tail fiber locus and determination of the receptor for phage AR1, which specifically infects Escherichia coli O157:H7.</title>
        <authorList>
            <person name="Yu S.L."/>
            <person name="Ko K.L."/>
            <person name="Chen C.S."/>
            <person name="Chang Y.C."/>
            <person name="Syu W.J."/>
        </authorList>
    </citation>
    <scope>NUCLEOTIDE SEQUENCE [GENOMIC DNA]</scope>
    <scope>FUNCTION</scope>
</reference>
<organismHost>
    <name type="scientific">Escherichia coli O157:H7</name>
    <dbReference type="NCBI Taxonomy" id="83334"/>
</organismHost>
<evidence type="ECO:0000250" key="1">
    <source>
        <dbReference type="UniProtKB" id="M1EBB2"/>
    </source>
</evidence>
<evidence type="ECO:0000256" key="2">
    <source>
        <dbReference type="SAM" id="MobiDB-lite"/>
    </source>
</evidence>
<evidence type="ECO:0000269" key="3">
    <source>
    </source>
</evidence>
<evidence type="ECO:0000305" key="4"/>
<protein>
    <recommendedName>
        <fullName evidence="1">Receptor-recognizing protein gp38</fullName>
    </recommendedName>
    <alternativeName>
        <fullName>Gene product 38</fullName>
        <shortName evidence="1">gp38</shortName>
    </alternativeName>
    <alternativeName>
        <fullName evidence="1">Long tail fiber adhesin</fullName>
    </alternativeName>
</protein>
<name>RBP_BPAR1</name>
<comment type="function">
    <text evidence="3">Receptor binding protein (RBP) that is at the tip of the long tail fibers and serves as the phage recognition site for the attachment host receptor OmpC.</text>
</comment>
<comment type="subcellular location">
    <subcellularLocation>
        <location evidence="1">Virion</location>
    </subcellularLocation>
    <text evidence="1">Forms the distal tip of the long tail fiber.</text>
</comment>
<comment type="domain">
    <text evidence="1">The N-terminus is involved in binding to the fiber protein p37. The C-terminus contains glycine-rich motifs (GRM) and mediates the host specificity. The glycine-rich motifs assemble into a 3-layered PG(II) sandwich domain.</text>
</comment>
<comment type="miscellaneous">
    <text>This phage use outer membrane protein ompA as a receptor.</text>
</comment>
<comment type="similarity">
    <text evidence="4">Belongs to the receptor-recognizing protein gp38 family.</text>
</comment>
<keyword id="KW-0945">Host-virus interaction</keyword>
<keyword id="KW-1161">Viral attachment to host cell</keyword>
<keyword id="KW-1230">Viral tail fiber protein</keyword>
<keyword id="KW-1227">Viral tail protein</keyword>
<keyword id="KW-0946">Virion</keyword>
<keyword id="KW-1160">Virus entry into host cell</keyword>